<accession>Q8RUS5</accession>
<accession>Q9SJX0</accession>
<sequence length="866" mass="99467">MMSSGHKGPNVRNFFKWQRGESSSSLTTGLLHNESHEIELSNYGGIPSPGSESPSGLLNGESLNVQPIADLDLFVERLYSYYRDKGLWCIIVKWAVELLSLGFIICFSGFFLLYVDWNGLQNAKCGMDAVESGTKPCDLVKEAIHPHPLSPFTLTTAIIVGYLALFSVYWLFCFLRFFAQLKDTLDFRHFYYNNLHVTDNEILTMPWATVLEKVVQLQSSQCLCVVKDLSAHDMVMRLMRKENYLIGMLNKGLLSFPISHWIPGAGPAVKSAPDGTQYHLVLTKTLEWTLNWCILQSMFDCNFRVRRDFVSNPTTLKKRLFVVGLAMLLLSPFLVIFMLVYLFLRHAEQFYNHPSTASSRRWSNLSKWLFREFNEVDHLFKHRINSSVVHASEYLKQFPSPIISIIAKFVSFVSGGFAAVLIIIAFLEESLLEGHIFGRNLFWYAAVFGTITAISRAAISDELLVLDPVGTMSLVVQNTHYMPKRWRGKENKDDVRLELETLFQYTGMMLLEEIASIFITPFLLMFVVPKRVDDILQFIKDFTVDIEGVGHVCSFSAFYFENHGNIKYGSPHNATRREQRSSQGKMEKSFLSFQSSYPSWESDSLGKQFLSNLRTFRDRKLHEINTRHSSPSRAWRESTNTPALYRDIPRNPLASGNHTDSMWLIDPDQRNHPYLLDWYYTSQAHNRTDHPIERANEILTANQNATDCWPPDLGIRGEDSRDLLNMEASTSGQFFRESILRHDQPEGEDSYGSQHPLDGRNQWWGRGNHSQISTAHPATTNSFIEPPDFINRYTAGNLLDNSWSRRSIEEEDEEEEELDWEENARRNLSRTTFMDDNDIEAGIDLHFDDVYSSRPQETSTSSTTLR</sequence>
<protein>
    <recommendedName>
        <fullName evidence="10">Autophagy-related protein 9</fullName>
        <shortName evidence="10">AtAPG9</shortName>
    </recommendedName>
</protein>
<proteinExistence type="evidence at protein level"/>
<organism>
    <name type="scientific">Arabidopsis thaliana</name>
    <name type="common">Mouse-ear cress</name>
    <dbReference type="NCBI Taxonomy" id="3702"/>
    <lineage>
        <taxon>Eukaryota</taxon>
        <taxon>Viridiplantae</taxon>
        <taxon>Streptophyta</taxon>
        <taxon>Embryophyta</taxon>
        <taxon>Tracheophyta</taxon>
        <taxon>Spermatophyta</taxon>
        <taxon>Magnoliopsida</taxon>
        <taxon>eudicotyledons</taxon>
        <taxon>Gunneridae</taxon>
        <taxon>Pentapetalae</taxon>
        <taxon>rosids</taxon>
        <taxon>malvids</taxon>
        <taxon>Brassicales</taxon>
        <taxon>Brassicaceae</taxon>
        <taxon>Camelineae</taxon>
        <taxon>Arabidopsis</taxon>
    </lineage>
</organism>
<keyword id="KW-0072">Autophagy</keyword>
<keyword id="KW-0445">Lipid transport</keyword>
<keyword id="KW-0472">Membrane</keyword>
<keyword id="KW-1185">Reference proteome</keyword>
<keyword id="KW-0812">Transmembrane</keyword>
<keyword id="KW-1133">Transmembrane helix</keyword>
<keyword id="KW-0813">Transport</keyword>
<evidence type="ECO:0000250" key="1">
    <source>
        <dbReference type="UniProtKB" id="O74312"/>
    </source>
</evidence>
<evidence type="ECO:0000250" key="2">
    <source>
        <dbReference type="UniProtKB" id="Q68FE2"/>
    </source>
</evidence>
<evidence type="ECO:0000250" key="3">
    <source>
        <dbReference type="UniProtKB" id="Q7Z3C6"/>
    </source>
</evidence>
<evidence type="ECO:0000255" key="4"/>
<evidence type="ECO:0000256" key="5">
    <source>
        <dbReference type="SAM" id="MobiDB-lite"/>
    </source>
</evidence>
<evidence type="ECO:0000269" key="6">
    <source>
    </source>
</evidence>
<evidence type="ECO:0000269" key="7">
    <source>
    </source>
</evidence>
<evidence type="ECO:0000269" key="8">
    <source>
    </source>
</evidence>
<evidence type="ECO:0000269" key="9">
    <source>
    </source>
</evidence>
<evidence type="ECO:0000303" key="10">
    <source>
    </source>
</evidence>
<evidence type="ECO:0000303" key="11">
    <source>
    </source>
</evidence>
<evidence type="ECO:0000305" key="12"/>
<evidence type="ECO:0000312" key="13">
    <source>
        <dbReference type="Araport" id="AT2G31260"/>
    </source>
</evidence>
<comment type="function">
    <text evidence="2 3 6 8">Phospholipid scramblase involved in autophagy by mediating autophagosomal membrane expansion (PubMed:12114572, PubMed:24805779). Cycles between the preautophagosomal structure/phagophore assembly site (PAS) and the cytoplasmic vesicle pool and supplies membrane for the growing autophagosome. Lipid scramblase activity plays a key role in preautophagosomal structure/phagophore assembly by distributing the phospholipids that arrive through ATG2 from the cytoplasmic to the luminal leaflet of the bilayer, thereby driving autophagosomal membrane expansion (By similarity). In addition to autophagy, also plays a role in necrotic cell death (By similarity). Plays an essential role in plant nutrient recycling (PubMed:12114572).</text>
</comment>
<comment type="subunit">
    <text evidence="9">Homotrimer; forms a homotrimer with a central pore that forms a path between the two membrane leaflets.</text>
</comment>
<comment type="subcellular location">
    <subcellularLocation>
        <location evidence="7">Preautophagosomal structure membrane</location>
        <topology evidence="4">Multi-pass membrane protein</topology>
    </subcellularLocation>
</comment>
<comment type="tissue specificity">
    <text evidence="6">Expressed in roots, leaves, stems and flowers.</text>
</comment>
<comment type="domain">
    <text evidence="3">Forms a homotrimer with a solvated central pore, which is connected laterally to the cytosol through the cavity within each protomer. Acts as a lipid scramblase that uses its central pore to function: the central pore opens laterally to accommodate lipid headgroups, thereby enabling lipid flipping and redistribution of lipids added to the outer leaflet of ATG9-containing vesicles, thereby enabling growth into autophagosomes.</text>
</comment>
<comment type="disruption phenotype">
    <text evidence="6">Mutant plants are hypersensitive to nitrogen or carbon starvation and show early bolting senescence.</text>
</comment>
<comment type="similarity">
    <text evidence="12">Belongs to the ATG9 family.</text>
</comment>
<comment type="caution">
    <text evidence="1 3 9">Low resolution structures by electron microscopy suggested the presence of six transmembrane regions (PubMed:31276439). However, high resolution structures in human and S.pombe showed that it is composed of four transmembrane and two intramembrane regions (By similarity).</text>
</comment>
<comment type="sequence caution" evidence="12">
    <conflict type="erroneous initiation">
        <sequence resource="EMBL-CDS" id="AAD20671"/>
    </conflict>
    <text>Truncated N-terminus.</text>
</comment>
<gene>
    <name evidence="11" type="primary">ATG9</name>
    <name evidence="10" type="synonym">APG9</name>
    <name evidence="13" type="ordered locus">At2g31260</name>
</gene>
<reference key="1">
    <citation type="journal article" date="2002" name="Plant Physiol.">
        <title>Leaf senescence and starvation-induced chlorosis are accelerated by the disruption of an Arabidopsis autophagy gene.</title>
        <authorList>
            <person name="Hanaoka H."/>
            <person name="Noda T."/>
            <person name="Shirano Y."/>
            <person name="Kato T."/>
            <person name="Hayashi H."/>
            <person name="Shibata D."/>
            <person name="Tabata S."/>
            <person name="Ohsumi Y."/>
        </authorList>
    </citation>
    <scope>NUCLEOTIDE SEQUENCE [MRNA]</scope>
    <scope>FUNCTION</scope>
    <scope>TISSUE SPECIFICITY</scope>
    <scope>GENE FAMILY</scope>
    <scope>NOMENCLATURE</scope>
    <scope>DISRUPTION PHENOTYPE</scope>
</reference>
<reference key="2">
    <citation type="journal article" date="1999" name="Nature">
        <title>Sequence and analysis of chromosome 2 of the plant Arabidopsis thaliana.</title>
        <authorList>
            <person name="Lin X."/>
            <person name="Kaul S."/>
            <person name="Rounsley S.D."/>
            <person name="Shea T.P."/>
            <person name="Benito M.-I."/>
            <person name="Town C.D."/>
            <person name="Fujii C.Y."/>
            <person name="Mason T.M."/>
            <person name="Bowman C.L."/>
            <person name="Barnstead M.E."/>
            <person name="Feldblyum T.V."/>
            <person name="Buell C.R."/>
            <person name="Ketchum K.A."/>
            <person name="Lee J.J."/>
            <person name="Ronning C.M."/>
            <person name="Koo H.L."/>
            <person name="Moffat K.S."/>
            <person name="Cronin L.A."/>
            <person name="Shen M."/>
            <person name="Pai G."/>
            <person name="Van Aken S."/>
            <person name="Umayam L."/>
            <person name="Tallon L.J."/>
            <person name="Gill J.E."/>
            <person name="Adams M.D."/>
            <person name="Carrera A.J."/>
            <person name="Creasy T.H."/>
            <person name="Goodman H.M."/>
            <person name="Somerville C.R."/>
            <person name="Copenhaver G.P."/>
            <person name="Preuss D."/>
            <person name="Nierman W.C."/>
            <person name="White O."/>
            <person name="Eisen J.A."/>
            <person name="Salzberg S.L."/>
            <person name="Fraser C.M."/>
            <person name="Venter J.C."/>
        </authorList>
    </citation>
    <scope>NUCLEOTIDE SEQUENCE [LARGE SCALE GENOMIC DNA]</scope>
    <source>
        <strain>cv. Columbia</strain>
    </source>
</reference>
<reference key="3">
    <citation type="journal article" date="2017" name="Plant J.">
        <title>Araport11: a complete reannotation of the Arabidopsis thaliana reference genome.</title>
        <authorList>
            <person name="Cheng C.Y."/>
            <person name="Krishnakumar V."/>
            <person name="Chan A.P."/>
            <person name="Thibaud-Nissen F."/>
            <person name="Schobel S."/>
            <person name="Town C.D."/>
        </authorList>
    </citation>
    <scope>GENOME REANNOTATION</scope>
    <source>
        <strain>cv. Columbia</strain>
    </source>
</reference>
<reference key="4">
    <citation type="journal article" date="2003" name="Science">
        <title>Empirical analysis of transcriptional activity in the Arabidopsis genome.</title>
        <authorList>
            <person name="Yamada K."/>
            <person name="Lim J."/>
            <person name="Dale J.M."/>
            <person name="Chen H."/>
            <person name="Shinn P."/>
            <person name="Palm C.J."/>
            <person name="Southwick A.M."/>
            <person name="Wu H.C."/>
            <person name="Kim C.J."/>
            <person name="Nguyen M."/>
            <person name="Pham P.K."/>
            <person name="Cheuk R.F."/>
            <person name="Karlin-Newmann G."/>
            <person name="Liu S.X."/>
            <person name="Lam B."/>
            <person name="Sakano H."/>
            <person name="Wu T."/>
            <person name="Yu G."/>
            <person name="Miranda M."/>
            <person name="Quach H.L."/>
            <person name="Tripp M."/>
            <person name="Chang C.H."/>
            <person name="Lee J.M."/>
            <person name="Toriumi M.J."/>
            <person name="Chan M.M."/>
            <person name="Tang C.C."/>
            <person name="Onodera C.S."/>
            <person name="Deng J.M."/>
            <person name="Akiyama K."/>
            <person name="Ansari Y."/>
            <person name="Arakawa T."/>
            <person name="Banh J."/>
            <person name="Banno F."/>
            <person name="Bowser L."/>
            <person name="Brooks S.Y."/>
            <person name="Carninci P."/>
            <person name="Chao Q."/>
            <person name="Choy N."/>
            <person name="Enju A."/>
            <person name="Goldsmith A.D."/>
            <person name="Gurjal M."/>
            <person name="Hansen N.F."/>
            <person name="Hayashizaki Y."/>
            <person name="Johnson-Hopson C."/>
            <person name="Hsuan V.W."/>
            <person name="Iida K."/>
            <person name="Karnes M."/>
            <person name="Khan S."/>
            <person name="Koesema E."/>
            <person name="Ishida J."/>
            <person name="Jiang P.X."/>
            <person name="Jones T."/>
            <person name="Kawai J."/>
            <person name="Kamiya A."/>
            <person name="Meyers C."/>
            <person name="Nakajima M."/>
            <person name="Narusaka M."/>
            <person name="Seki M."/>
            <person name="Sakurai T."/>
            <person name="Satou M."/>
            <person name="Tamse R."/>
            <person name="Vaysberg M."/>
            <person name="Wallender E.K."/>
            <person name="Wong C."/>
            <person name="Yamamura Y."/>
            <person name="Yuan S."/>
            <person name="Shinozaki K."/>
            <person name="Davis R.W."/>
            <person name="Theologis A."/>
            <person name="Ecker J.R."/>
        </authorList>
    </citation>
    <scope>NUCLEOTIDE SEQUENCE [LARGE SCALE MRNA]</scope>
    <source>
        <strain>cv. Columbia</strain>
    </source>
</reference>
<reference key="5">
    <citation type="journal article" date="2013" name="Plant Cell">
        <title>A BAR-domain protein SH3P2, which binds to phosphatidylinositol 3-phosphate and ATG8, regulates autophagosome formation in Arabidopsis.</title>
        <authorList>
            <person name="Zhuang X."/>
            <person name="Wang H."/>
            <person name="Lam S.K."/>
            <person name="Gao C."/>
            <person name="Wang X."/>
            <person name="Cai Y."/>
            <person name="Jiang L."/>
        </authorList>
    </citation>
    <scope>SUBCELLULAR LOCATION</scope>
</reference>
<reference key="6">
    <citation type="journal article" date="2014" name="Mol. Cells">
        <title>A revised assay for monitoring autophagic flux in Arabidopsis thaliana reveals involvement of AUTOPHAGY-RELATED9 in autophagy.</title>
        <authorList>
            <person name="Shin K.D."/>
            <person name="Lee H.N."/>
            <person name="Chung T."/>
        </authorList>
    </citation>
    <scope>FUNCTION</scope>
</reference>
<reference key="7">
    <citation type="journal article" date="2020" name="Autophagy">
        <title>Subnanometer resolution cryo-EM structure of Arabidopsis thaliana ATG9.</title>
        <authorList>
            <person name="Lai L.T.F."/>
            <person name="Yu C."/>
            <person name="Wong J.S.K."/>
            <person name="Lo H.S."/>
            <person name="Benlekbir S."/>
            <person name="Jiang L."/>
            <person name="Lau W.C.Y."/>
        </authorList>
    </citation>
    <scope>STRUCTURE BY ELECTRON MICROSCOPY (7.8 ANGSTROMS)</scope>
    <scope>SUBUNIT</scope>
</reference>
<dbReference type="EMBL" id="AB073174">
    <property type="protein sequence ID" value="BAB88386.1"/>
    <property type="molecule type" value="mRNA"/>
</dbReference>
<dbReference type="EMBL" id="AC006593">
    <property type="protein sequence ID" value="AAD20671.1"/>
    <property type="status" value="ALT_INIT"/>
    <property type="molecule type" value="Genomic_DNA"/>
</dbReference>
<dbReference type="EMBL" id="CP002685">
    <property type="protein sequence ID" value="AEC08515.1"/>
    <property type="molecule type" value="Genomic_DNA"/>
</dbReference>
<dbReference type="EMBL" id="AY075619">
    <property type="protein sequence ID" value="AAL91630.1"/>
    <property type="molecule type" value="mRNA"/>
</dbReference>
<dbReference type="EMBL" id="AY099644">
    <property type="protein sequence ID" value="AAM20495.1"/>
    <property type="molecule type" value="mRNA"/>
</dbReference>
<dbReference type="EMBL" id="BT000243">
    <property type="protein sequence ID" value="AAN15562.1"/>
    <property type="molecule type" value="mRNA"/>
</dbReference>
<dbReference type="EMBL" id="BT000816">
    <property type="protein sequence ID" value="AAN33191.1"/>
    <property type="molecule type" value="mRNA"/>
</dbReference>
<dbReference type="PIR" id="E84718">
    <property type="entry name" value="E84718"/>
</dbReference>
<dbReference type="RefSeq" id="NP_850164.1">
    <property type="nucleotide sequence ID" value="NM_179833.2"/>
</dbReference>
<dbReference type="SMR" id="Q8RUS5"/>
<dbReference type="FunCoup" id="Q8RUS5">
    <property type="interactions" value="3920"/>
</dbReference>
<dbReference type="IntAct" id="Q8RUS5">
    <property type="interactions" value="3"/>
</dbReference>
<dbReference type="STRING" id="3702.Q8RUS5"/>
<dbReference type="TCDB" id="9.A.15.3.1">
    <property type="family name" value="the autophagy-related phagophore-formation transporter (apt) family"/>
</dbReference>
<dbReference type="PaxDb" id="3702-AT2G31260.1"/>
<dbReference type="ProteomicsDB" id="246549"/>
<dbReference type="EnsemblPlants" id="AT2G31260.1">
    <property type="protein sequence ID" value="AT2G31260.1"/>
    <property type="gene ID" value="AT2G31260"/>
</dbReference>
<dbReference type="GeneID" id="817683"/>
<dbReference type="Gramene" id="AT2G31260.1">
    <property type="protein sequence ID" value="AT2G31260.1"/>
    <property type="gene ID" value="AT2G31260"/>
</dbReference>
<dbReference type="KEGG" id="ath:AT2G31260"/>
<dbReference type="Araport" id="AT2G31260"/>
<dbReference type="TAIR" id="AT2G31260">
    <property type="gene designation" value="APG9"/>
</dbReference>
<dbReference type="eggNOG" id="KOG2173">
    <property type="taxonomic scope" value="Eukaryota"/>
</dbReference>
<dbReference type="HOGENOM" id="CLU_330511_0_0_1"/>
<dbReference type="InParanoid" id="Q8RUS5"/>
<dbReference type="OMA" id="IPTGECV"/>
<dbReference type="OrthoDB" id="2020634at2759"/>
<dbReference type="PhylomeDB" id="Q8RUS5"/>
<dbReference type="PRO" id="PR:Q8RUS5"/>
<dbReference type="Proteomes" id="UP000006548">
    <property type="component" value="Chromosome 2"/>
</dbReference>
<dbReference type="ExpressionAtlas" id="Q8RUS5">
    <property type="expression patterns" value="baseline and differential"/>
</dbReference>
<dbReference type="GO" id="GO:0034045">
    <property type="term" value="C:phagophore assembly site membrane"/>
    <property type="evidence" value="ECO:0007669"/>
    <property type="project" value="UniProtKB-SubCell"/>
</dbReference>
<dbReference type="GO" id="GO:0006914">
    <property type="term" value="P:autophagy"/>
    <property type="evidence" value="ECO:0000315"/>
    <property type="project" value="TAIR"/>
</dbReference>
<dbReference type="GO" id="GO:0050832">
    <property type="term" value="P:defense response to fungus"/>
    <property type="evidence" value="ECO:0000270"/>
    <property type="project" value="UniProtKB"/>
</dbReference>
<dbReference type="GO" id="GO:0006869">
    <property type="term" value="P:lipid transport"/>
    <property type="evidence" value="ECO:0007669"/>
    <property type="project" value="UniProtKB-KW"/>
</dbReference>
<dbReference type="InterPro" id="IPR007241">
    <property type="entry name" value="Autophagy-rel_prot_9"/>
</dbReference>
<dbReference type="PANTHER" id="PTHR13038">
    <property type="entry name" value="APG9 AUTOPHAGY 9"/>
    <property type="match status" value="1"/>
</dbReference>
<dbReference type="PANTHER" id="PTHR13038:SF10">
    <property type="entry name" value="AUTOPHAGY-RELATED PROTEIN 9"/>
    <property type="match status" value="1"/>
</dbReference>
<dbReference type="Pfam" id="PF04109">
    <property type="entry name" value="ATG9"/>
    <property type="match status" value="1"/>
</dbReference>
<feature type="chain" id="PRO_0000434624" description="Autophagy-related protein 9">
    <location>
        <begin position="1"/>
        <end position="866"/>
    </location>
</feature>
<feature type="topological domain" description="Cytoplasmic" evidence="12">
    <location>
        <begin position="1"/>
        <end position="94"/>
    </location>
</feature>
<feature type="transmembrane region" description="Helical" evidence="4">
    <location>
        <begin position="95"/>
        <end position="115"/>
    </location>
</feature>
<feature type="topological domain" description="Lumenal" evidence="12">
    <location>
        <begin position="116"/>
        <end position="153"/>
    </location>
</feature>
<feature type="transmembrane region" description="Helical" evidence="4">
    <location>
        <begin position="154"/>
        <end position="174"/>
    </location>
</feature>
<feature type="topological domain" description="Cytoplasmic" evidence="12">
    <location>
        <begin position="175"/>
        <end position="319"/>
    </location>
</feature>
<feature type="intramembrane region" evidence="3">
    <location>
        <begin position="320"/>
        <end position="340"/>
    </location>
</feature>
<feature type="topological domain" description="Cytoplasmic" evidence="12">
    <location>
        <begin position="341"/>
        <end position="404"/>
    </location>
</feature>
<feature type="transmembrane region" description="Helical" evidence="4">
    <location>
        <begin position="405"/>
        <end position="425"/>
    </location>
</feature>
<feature type="topological domain" description="Lumenal" evidence="12">
    <location>
        <begin position="426"/>
        <end position="433"/>
    </location>
</feature>
<feature type="transmembrane region" description="Helical" evidence="4">
    <location>
        <begin position="434"/>
        <end position="454"/>
    </location>
</feature>
<feature type="topological domain" description="Cytoplasmic" evidence="12">
    <location>
        <begin position="455"/>
        <end position="507"/>
    </location>
</feature>
<feature type="intramembrane region" evidence="3">
    <location>
        <begin position="508"/>
        <end position="528"/>
    </location>
</feature>
<feature type="topological domain" description="Cytoplasmic" evidence="12">
    <location>
        <begin position="529"/>
        <end position="866"/>
    </location>
</feature>
<feature type="region of interest" description="Disordered" evidence="5">
    <location>
        <begin position="744"/>
        <end position="781"/>
    </location>
</feature>
<feature type="compositionally biased region" description="Polar residues" evidence="5">
    <location>
        <begin position="768"/>
        <end position="781"/>
    </location>
</feature>
<name>ATG9_ARATH</name>